<keyword id="KW-1003">Cell membrane</keyword>
<keyword id="KW-1015">Disulfide bond</keyword>
<keyword id="KW-0297">G-protein coupled receptor</keyword>
<keyword id="KW-0325">Glycoprotein</keyword>
<keyword id="KW-0449">Lipoprotein</keyword>
<keyword id="KW-0472">Membrane</keyword>
<keyword id="KW-0564">Palmitate</keyword>
<keyword id="KW-0675">Receptor</keyword>
<keyword id="KW-1185">Reference proteome</keyword>
<keyword id="KW-0807">Transducer</keyword>
<keyword id="KW-0812">Transmembrane</keyword>
<keyword id="KW-1133">Transmembrane helix</keyword>
<name>NPY4R_RAT</name>
<evidence type="ECO:0000255" key="1"/>
<evidence type="ECO:0000255" key="2">
    <source>
        <dbReference type="PROSITE-ProRule" id="PRU00521"/>
    </source>
</evidence>
<evidence type="ECO:0000269" key="3">
    <source>
    </source>
</evidence>
<evidence type="ECO:0000305" key="4"/>
<reference key="1">
    <citation type="journal article" date="1996" name="Proc. Natl. Acad. Sci. U.S.A.">
        <title>The cloned rat pancreatic polypeptide receptor exhibits profound differences to the orthologous receptor.</title>
        <authorList>
            <person name="Lundell I."/>
            <person name="Statnick M.A."/>
            <person name="Johnson D."/>
            <person name="Schober D.A."/>
            <person name="Starback P."/>
            <person name="Gehlert D.R."/>
            <person name="Larhammar D."/>
        </authorList>
    </citation>
    <scope>NUCLEOTIDE SEQUENCE [GENOMIC DNA]</scope>
    <scope>FUNCTION</scope>
    <scope>SUBCELLULAR LOCATION</scope>
    <scope>TISSUE SPECIFICITY</scope>
    <source>
        <strain>Sprague-Dawley</strain>
    </source>
</reference>
<reference key="2">
    <citation type="journal article" date="1996" name="Proc. Natl. Acad. Sci. U.S.A.">
        <title>Cloning and functional expression of cDNAs encoding human and rat pancreatic polypeptide receptors.</title>
        <authorList>
            <person name="Yan H."/>
            <person name="Yang J."/>
            <person name="Marasco J."/>
            <person name="Yamaguchi K."/>
            <person name="Brenner S."/>
            <person name="Collins F."/>
            <person name="Karbon W."/>
        </authorList>
    </citation>
    <scope>NUCLEOTIDE SEQUENCE [MRNA]</scope>
</reference>
<reference key="3">
    <citation type="journal article" date="1997" name="Peptides">
        <title>A structure-activity analysis of the cloned rat and human Y4 receptors for pancreatic polypeptide.</title>
        <authorList>
            <person name="Walker M.W."/>
            <person name="Smith K.E."/>
            <person name="Bard J."/>
            <person name="Vaysse P.J.-J."/>
            <person name="Gerald C."/>
            <person name="Daouti S."/>
            <person name="Weinshank R.L."/>
            <person name="Branchek T.A."/>
        </authorList>
    </citation>
    <scope>NUCLEOTIDE SEQUENCE [GENOMIC DNA]</scope>
    <source>
        <strain>Wistar</strain>
    </source>
</reference>
<comment type="function">
    <text evidence="3">G protein-coupled receptor for PPY/pancreatic polypeptide/PP that is negatively coupled to cAMP (PubMed:8643536). Has much lower affinity for the NPY/neuropeptide Y and PYY/peptide YY (PubMed:8643536).</text>
</comment>
<comment type="subcellular location">
    <subcellularLocation>
        <location evidence="3">Cell membrane</location>
        <topology evidence="1">Multi-pass membrane protein</topology>
    </subcellularLocation>
</comment>
<comment type="tissue specificity">
    <text evidence="3">Detected in colon and brain.</text>
</comment>
<comment type="similarity">
    <text evidence="2">Belongs to the G-protein coupled receptor 1 family.</text>
</comment>
<accession>Q63447</accession>
<accession>Q62892</accession>
<protein>
    <recommendedName>
        <fullName>Neuropeptide Y receptor type 4</fullName>
        <shortName>NPY4-R</shortName>
    </recommendedName>
    <alternativeName>
        <fullName>Pancreatic polypeptide receptor 1</fullName>
        <shortName>PP1</shortName>
    </alternativeName>
</protein>
<feature type="chain" id="PRO_0000069937" description="Neuropeptide Y receptor type 4">
    <location>
        <begin position="1"/>
        <end position="375"/>
    </location>
</feature>
<feature type="topological domain" description="Extracellular" evidence="1">
    <location>
        <begin position="1"/>
        <end position="39"/>
    </location>
</feature>
<feature type="transmembrane region" description="Helical; Name=1" evidence="1">
    <location>
        <begin position="40"/>
        <end position="60"/>
    </location>
</feature>
<feature type="topological domain" description="Cytoplasmic" evidence="1">
    <location>
        <begin position="61"/>
        <end position="78"/>
    </location>
</feature>
<feature type="transmembrane region" description="Helical; Name=2" evidence="1">
    <location>
        <begin position="79"/>
        <end position="99"/>
    </location>
</feature>
<feature type="topological domain" description="Extracellular" evidence="1">
    <location>
        <begin position="100"/>
        <end position="116"/>
    </location>
</feature>
<feature type="transmembrane region" description="Helical; Name=3" evidence="1">
    <location>
        <begin position="117"/>
        <end position="137"/>
    </location>
</feature>
<feature type="topological domain" description="Cytoplasmic" evidence="1">
    <location>
        <begin position="138"/>
        <end position="155"/>
    </location>
</feature>
<feature type="transmembrane region" description="Helical; Name=4" evidence="1">
    <location>
        <begin position="156"/>
        <end position="176"/>
    </location>
</feature>
<feature type="topological domain" description="Extracellular" evidence="1">
    <location>
        <begin position="177"/>
        <end position="211"/>
    </location>
</feature>
<feature type="transmembrane region" description="Helical; Name=5" evidence="1">
    <location>
        <begin position="212"/>
        <end position="232"/>
    </location>
</feature>
<feature type="topological domain" description="Cytoplasmic" evidence="1">
    <location>
        <begin position="233"/>
        <end position="262"/>
    </location>
</feature>
<feature type="transmembrane region" description="Helical; Name=6" evidence="1">
    <location>
        <begin position="263"/>
        <end position="283"/>
    </location>
</feature>
<feature type="topological domain" description="Extracellular" evidence="1">
    <location>
        <begin position="284"/>
        <end position="301"/>
    </location>
</feature>
<feature type="transmembrane region" description="Helical; Name=7" evidence="1">
    <location>
        <begin position="302"/>
        <end position="322"/>
    </location>
</feature>
<feature type="topological domain" description="Cytoplasmic" evidence="1">
    <location>
        <begin position="323"/>
        <end position="375"/>
    </location>
</feature>
<feature type="lipid moiety-binding region" description="S-palmitoyl cysteine" evidence="1">
    <location>
        <position position="340"/>
    </location>
</feature>
<feature type="glycosylation site" description="N-linked (GlcNAc...) asparagine" evidence="1">
    <location>
        <position position="2"/>
    </location>
</feature>
<feature type="glycosylation site" description="N-linked (GlcNAc...) asparagine" evidence="1">
    <location>
        <position position="19"/>
    </location>
</feature>
<feature type="glycosylation site" description="N-linked (GlcNAc...) asparagine" evidence="1">
    <location>
        <position position="29"/>
    </location>
</feature>
<feature type="glycosylation site" description="N-linked (GlcNAc...) asparagine" evidence="1">
    <location>
        <position position="187"/>
    </location>
</feature>
<feature type="disulfide bond" evidence="2">
    <location>
        <begin position="114"/>
        <end position="201"/>
    </location>
</feature>
<feature type="sequence conflict" description="In Ref. 2; AAB07761." evidence="4" ref="2">
    <original>P</original>
    <variation>S</variation>
    <location>
        <position position="23"/>
    </location>
</feature>
<organism>
    <name type="scientific">Rattus norvegicus</name>
    <name type="common">Rat</name>
    <dbReference type="NCBI Taxonomy" id="10116"/>
    <lineage>
        <taxon>Eukaryota</taxon>
        <taxon>Metazoa</taxon>
        <taxon>Chordata</taxon>
        <taxon>Craniata</taxon>
        <taxon>Vertebrata</taxon>
        <taxon>Euteleostomi</taxon>
        <taxon>Mammalia</taxon>
        <taxon>Eutheria</taxon>
        <taxon>Euarchontoglires</taxon>
        <taxon>Glires</taxon>
        <taxon>Rodentia</taxon>
        <taxon>Myomorpha</taxon>
        <taxon>Muroidea</taxon>
        <taxon>Muridae</taxon>
        <taxon>Murinae</taxon>
        <taxon>Rattus</taxon>
    </lineage>
</organism>
<gene>
    <name type="primary">Npy4r</name>
    <name type="synonym">Ppyr1</name>
</gene>
<sequence length="375" mass="42568">MNTSHLMASLSPAFLQGKNGTNPLDSLYNLSDGCQDSADLLAFIITTYSVETVLGVLGNLCLIFVTTRQKEKSNVTNLLIANLAFSDFLMCLICQPLTVTYTIMDYWIFGEVLCKMLTFIQCMSVTVSILSLVLVALERHQLIINPTGWKPSISQAYLGIVVIWFISCFLSLPFLANSILNDLFHYNHSKVVEFLEDKVVCFVSWSSDHHRLIYTTFLLLFQYCVPLAFILVCYMRIYQRLQRQRRAFHTHTCSSRVGQMKRINGMLMAMVTAFAVLWLPLHVFNTLEDWYQEAIPACHGNLIFLMCHLFAMASTCVNPFIYGFLNINFKKDIKALVLTCRCRPPQGEPEPLPLSTVHTDLSKGSMRMGSKSNVM</sequence>
<dbReference type="EMBL" id="Z68180">
    <property type="protein sequence ID" value="CAA92322.1"/>
    <property type="molecule type" value="Genomic_DNA"/>
</dbReference>
<dbReference type="EMBL" id="U42388">
    <property type="protein sequence ID" value="AAB07761.1"/>
    <property type="molecule type" value="mRNA"/>
</dbReference>
<dbReference type="EMBL" id="U84245">
    <property type="protein sequence ID" value="AAB87736.1"/>
    <property type="molecule type" value="Genomic_DNA"/>
</dbReference>
<dbReference type="RefSeq" id="NP_113769.1">
    <property type="nucleotide sequence ID" value="NM_031581.2"/>
</dbReference>
<dbReference type="SMR" id="Q63447"/>
<dbReference type="FunCoup" id="Q63447">
    <property type="interactions" value="98"/>
</dbReference>
<dbReference type="STRING" id="10116.ENSRNOP00000069607"/>
<dbReference type="BindingDB" id="Q63447"/>
<dbReference type="ChEMBL" id="CHEMBL4827"/>
<dbReference type="GuidetoPHARMACOLOGY" id="307"/>
<dbReference type="GlyCosmos" id="Q63447">
    <property type="glycosylation" value="4 sites, No reported glycans"/>
</dbReference>
<dbReference type="GlyGen" id="Q63447">
    <property type="glycosylation" value="4 sites"/>
</dbReference>
<dbReference type="iPTMnet" id="Q63447"/>
<dbReference type="PhosphoSitePlus" id="Q63447"/>
<dbReference type="PaxDb" id="10116-ENSRNOP00000027469"/>
<dbReference type="Ensembl" id="ENSRNOT00000083105.2">
    <property type="protein sequence ID" value="ENSRNOP00000069607.1"/>
    <property type="gene ID" value="ENSRNOG00000061026.2"/>
</dbReference>
<dbReference type="GeneID" id="29471"/>
<dbReference type="KEGG" id="rno:29471"/>
<dbReference type="UCSC" id="RGD:61864">
    <property type="organism name" value="rat"/>
</dbReference>
<dbReference type="AGR" id="RGD:61864"/>
<dbReference type="CTD" id="5540"/>
<dbReference type="RGD" id="61864">
    <property type="gene designation" value="Npy4r"/>
</dbReference>
<dbReference type="eggNOG" id="KOG3656">
    <property type="taxonomic scope" value="Eukaryota"/>
</dbReference>
<dbReference type="GeneTree" id="ENSGT00940000161927"/>
<dbReference type="HOGENOM" id="CLU_009579_6_1_1"/>
<dbReference type="InParanoid" id="Q63447"/>
<dbReference type="OMA" id="FTVVYTM"/>
<dbReference type="OrthoDB" id="9046662at2759"/>
<dbReference type="PhylomeDB" id="Q63447"/>
<dbReference type="TreeFam" id="TF315303"/>
<dbReference type="Reactome" id="R-RNO-375276">
    <property type="pathway name" value="Peptide ligand-binding receptors"/>
</dbReference>
<dbReference type="Reactome" id="R-RNO-418594">
    <property type="pathway name" value="G alpha (i) signalling events"/>
</dbReference>
<dbReference type="PRO" id="PR:Q63447"/>
<dbReference type="Proteomes" id="UP000002494">
    <property type="component" value="Chromosome 16"/>
</dbReference>
<dbReference type="Bgee" id="ENSRNOG00000061026">
    <property type="expression patterns" value="Expressed in colon and 7 other cell types or tissues"/>
</dbReference>
<dbReference type="GO" id="GO:0016020">
    <property type="term" value="C:membrane"/>
    <property type="evidence" value="ECO:0000266"/>
    <property type="project" value="RGD"/>
</dbReference>
<dbReference type="GO" id="GO:0043005">
    <property type="term" value="C:neuron projection"/>
    <property type="evidence" value="ECO:0000318"/>
    <property type="project" value="GO_Central"/>
</dbReference>
<dbReference type="GO" id="GO:0005886">
    <property type="term" value="C:plasma membrane"/>
    <property type="evidence" value="ECO:0000318"/>
    <property type="project" value="GO_Central"/>
</dbReference>
<dbReference type="GO" id="GO:0042923">
    <property type="term" value="F:neuropeptide binding"/>
    <property type="evidence" value="ECO:0000318"/>
    <property type="project" value="GO_Central"/>
</dbReference>
<dbReference type="GO" id="GO:0001602">
    <property type="term" value="F:pancreatic polypeptide receptor activity"/>
    <property type="evidence" value="ECO:0000314"/>
    <property type="project" value="RGD"/>
</dbReference>
<dbReference type="GO" id="GO:0042277">
    <property type="term" value="F:peptide binding"/>
    <property type="evidence" value="ECO:0000315"/>
    <property type="project" value="RGD"/>
</dbReference>
<dbReference type="GO" id="GO:0017046">
    <property type="term" value="F:peptide hormone binding"/>
    <property type="evidence" value="ECO:0000266"/>
    <property type="project" value="RGD"/>
</dbReference>
<dbReference type="GO" id="GO:0001601">
    <property type="term" value="F:peptide YY receptor activity"/>
    <property type="evidence" value="ECO:0000266"/>
    <property type="project" value="RGD"/>
</dbReference>
<dbReference type="GO" id="GO:0007186">
    <property type="term" value="P:G protein-coupled receptor signaling pathway"/>
    <property type="evidence" value="ECO:0000266"/>
    <property type="project" value="RGD"/>
</dbReference>
<dbReference type="CDD" id="cd15397">
    <property type="entry name" value="7tmA_NPY4R"/>
    <property type="match status" value="1"/>
</dbReference>
<dbReference type="FunFam" id="1.20.1070.10:FF:000062">
    <property type="entry name" value="Neuropeptide Y receptor type 1"/>
    <property type="match status" value="1"/>
</dbReference>
<dbReference type="Gene3D" id="1.20.1070.10">
    <property type="entry name" value="Rhodopsin 7-helix transmembrane proteins"/>
    <property type="match status" value="1"/>
</dbReference>
<dbReference type="InterPro" id="IPR000276">
    <property type="entry name" value="GPCR_Rhodpsn"/>
</dbReference>
<dbReference type="InterPro" id="IPR017452">
    <property type="entry name" value="GPCR_Rhodpsn_7TM"/>
</dbReference>
<dbReference type="InterPro" id="IPR001933">
    <property type="entry name" value="NPY4_rcpt"/>
</dbReference>
<dbReference type="InterPro" id="IPR000611">
    <property type="entry name" value="NPY_rcpt"/>
</dbReference>
<dbReference type="PANTHER" id="PTHR24235">
    <property type="entry name" value="NEUROPEPTIDE Y RECEPTOR"/>
    <property type="match status" value="1"/>
</dbReference>
<dbReference type="PANTHER" id="PTHR24235:SF25">
    <property type="entry name" value="NEUROPEPTIDE Y RECEPTOR TYPE 4-RELATED"/>
    <property type="match status" value="1"/>
</dbReference>
<dbReference type="Pfam" id="PF00001">
    <property type="entry name" value="7tm_1"/>
    <property type="match status" value="1"/>
</dbReference>
<dbReference type="PRINTS" id="PR00237">
    <property type="entry name" value="GPCRRHODOPSN"/>
</dbReference>
<dbReference type="PRINTS" id="PR01015">
    <property type="entry name" value="NRPEPTIDEY4R"/>
</dbReference>
<dbReference type="PRINTS" id="PR01012">
    <property type="entry name" value="NRPEPTIDEYR"/>
</dbReference>
<dbReference type="SUPFAM" id="SSF81321">
    <property type="entry name" value="Family A G protein-coupled receptor-like"/>
    <property type="match status" value="1"/>
</dbReference>
<dbReference type="PROSITE" id="PS00237">
    <property type="entry name" value="G_PROTEIN_RECEP_F1_1"/>
    <property type="match status" value="1"/>
</dbReference>
<dbReference type="PROSITE" id="PS50262">
    <property type="entry name" value="G_PROTEIN_RECEP_F1_2"/>
    <property type="match status" value="1"/>
</dbReference>
<proteinExistence type="evidence at transcript level"/>